<name>ETFB_METME</name>
<sequence>MKILVAVKQTAALEEDFEIREDGMDVDEDFMMYDLNEWDDFSLEEAMKIKESSDTDVEVVVVSVGPDRVDESLRKCLAKGADRAVRVWDDAAEGSDAIVVGRILTEVIKKEAPDMVFAGVQSSDQAYASTGISVASYLNWPHAAVVADLQYKPGDNKAVIRRELEGGMLQEVEINCPAVLTIQLGINKPRYASLRGIKQAATKPIEEVSLADIGLSANDVGAAQSMSRVRRMYIPEKGRATMIEGTISEQAAKIIQIINEFKGA</sequence>
<dbReference type="EMBL" id="U17242">
    <property type="protein sequence ID" value="AAA64952.1"/>
    <property type="molecule type" value="Genomic_DNA"/>
</dbReference>
<dbReference type="PIR" id="A55487">
    <property type="entry name" value="A55487"/>
</dbReference>
<dbReference type="PDB" id="1O94">
    <property type="method" value="X-ray"/>
    <property type="resolution" value="2.00 A"/>
    <property type="chains" value="C/E=1-264"/>
</dbReference>
<dbReference type="PDB" id="1O95">
    <property type="method" value="X-ray"/>
    <property type="resolution" value="3.70 A"/>
    <property type="chains" value="C/E=1-264"/>
</dbReference>
<dbReference type="PDB" id="1O96">
    <property type="method" value="X-ray"/>
    <property type="resolution" value="3.10 A"/>
    <property type="chains" value="A/C/E/Q=1-264"/>
</dbReference>
<dbReference type="PDB" id="1O97">
    <property type="method" value="X-ray"/>
    <property type="resolution" value="1.60 A"/>
    <property type="chains" value="C=1-264"/>
</dbReference>
<dbReference type="PDB" id="3CLR">
    <property type="method" value="X-ray"/>
    <property type="resolution" value="1.90 A"/>
    <property type="chains" value="C=1-264"/>
</dbReference>
<dbReference type="PDB" id="3CLS">
    <property type="method" value="X-ray"/>
    <property type="resolution" value="1.65 A"/>
    <property type="chains" value="C=1-264"/>
</dbReference>
<dbReference type="PDB" id="3CLT">
    <property type="method" value="X-ray"/>
    <property type="resolution" value="2.00 A"/>
    <property type="chains" value="C=1-264"/>
</dbReference>
<dbReference type="PDB" id="3CLU">
    <property type="method" value="X-ray"/>
    <property type="resolution" value="1.80 A"/>
    <property type="chains" value="C=1-264"/>
</dbReference>
<dbReference type="PDBsum" id="1O94"/>
<dbReference type="PDBsum" id="1O95"/>
<dbReference type="PDBsum" id="1O96"/>
<dbReference type="PDBsum" id="1O97"/>
<dbReference type="PDBsum" id="3CLR"/>
<dbReference type="PDBsum" id="3CLS"/>
<dbReference type="PDBsum" id="3CLT"/>
<dbReference type="PDBsum" id="3CLU"/>
<dbReference type="SMR" id="P53570"/>
<dbReference type="MINT" id="P53570"/>
<dbReference type="STRING" id="1122236.GCA_000378225_02072"/>
<dbReference type="EvolutionaryTrace" id="P53570"/>
<dbReference type="GO" id="GO:0009055">
    <property type="term" value="F:electron transfer activity"/>
    <property type="evidence" value="ECO:0007669"/>
    <property type="project" value="InterPro"/>
</dbReference>
<dbReference type="GO" id="GO:0000166">
    <property type="term" value="F:nucleotide binding"/>
    <property type="evidence" value="ECO:0007669"/>
    <property type="project" value="UniProtKB-KW"/>
</dbReference>
<dbReference type="CDD" id="cd01714">
    <property type="entry name" value="ETF_beta"/>
    <property type="match status" value="1"/>
</dbReference>
<dbReference type="Gene3D" id="3.40.50.620">
    <property type="entry name" value="HUPs"/>
    <property type="match status" value="1"/>
</dbReference>
<dbReference type="InterPro" id="IPR000049">
    <property type="entry name" value="ET-Flavoprotein_bsu_CS"/>
</dbReference>
<dbReference type="InterPro" id="IPR014730">
    <property type="entry name" value="ETF_a/b_N"/>
</dbReference>
<dbReference type="InterPro" id="IPR012255">
    <property type="entry name" value="ETF_b"/>
</dbReference>
<dbReference type="InterPro" id="IPR033948">
    <property type="entry name" value="ETF_beta_N"/>
</dbReference>
<dbReference type="InterPro" id="IPR014729">
    <property type="entry name" value="Rossmann-like_a/b/a_fold"/>
</dbReference>
<dbReference type="PANTHER" id="PTHR21294">
    <property type="entry name" value="ELECTRON TRANSFER FLAVOPROTEIN BETA-SUBUNIT"/>
    <property type="match status" value="1"/>
</dbReference>
<dbReference type="PANTHER" id="PTHR21294:SF8">
    <property type="entry name" value="ELECTRON TRANSFER FLAVOPROTEIN SUBUNIT BETA"/>
    <property type="match status" value="1"/>
</dbReference>
<dbReference type="Pfam" id="PF01012">
    <property type="entry name" value="ETF"/>
    <property type="match status" value="1"/>
</dbReference>
<dbReference type="PIRSF" id="PIRSF000090">
    <property type="entry name" value="Beta-ETF"/>
    <property type="match status" value="1"/>
</dbReference>
<dbReference type="SMART" id="SM00893">
    <property type="entry name" value="ETF"/>
    <property type="match status" value="1"/>
</dbReference>
<dbReference type="SUPFAM" id="SSF52402">
    <property type="entry name" value="Adenine nucleotide alpha hydrolases-like"/>
    <property type="match status" value="1"/>
</dbReference>
<dbReference type="PROSITE" id="PS01065">
    <property type="entry name" value="ETF_BETA"/>
    <property type="match status" value="1"/>
</dbReference>
<gene>
    <name type="primary">etfB</name>
</gene>
<accession>P53570</accession>
<organism>
    <name type="scientific">Methylophilus methylotrophus</name>
    <name type="common">Bacterium W3A1</name>
    <dbReference type="NCBI Taxonomy" id="17"/>
    <lineage>
        <taxon>Bacteria</taxon>
        <taxon>Pseudomonadati</taxon>
        <taxon>Pseudomonadota</taxon>
        <taxon>Betaproteobacteria</taxon>
        <taxon>Nitrosomonadales</taxon>
        <taxon>Methylophilaceae</taxon>
        <taxon>Methylophilus</taxon>
    </lineage>
</organism>
<reference key="1">
    <citation type="journal article" date="1994" name="J. Biol. Chem.">
        <title>Cloning, sequence analysis, and expression of the genes encoding the two subunits of the methylotrophic bacterium W3A1 electron transfer flavoprotein.</title>
        <authorList>
            <person name="Chen D."/>
            <person name="Swenson R.P."/>
        </authorList>
    </citation>
    <scope>NUCLEOTIDE SEQUENCE [GENOMIC DNA]</scope>
    <scope>PROTEIN SEQUENCE OF 1-26</scope>
    <scope>MASS SPECTROMETRY</scope>
    <scope>FUNCTION</scope>
    <scope>SUBUNIT</scope>
</reference>
<reference evidence="4 5 6 7" key="2">
    <citation type="journal article" date="2003" name="Nat. Struct. Biol.">
        <title>Extensive conformational sampling in a ternary electron transfer complex.</title>
        <authorList>
            <person name="Leys D."/>
            <person name="Basran J."/>
            <person name="Talfournier F."/>
            <person name="Sutcliffe M.J."/>
            <person name="Scrutton N.S."/>
        </authorList>
    </citation>
    <scope>X-RAY CRYSTALLOGRAPHY (2.0 ANGSTROMS) IN COMPLEX WITH AMP AND TMADH</scope>
    <scope>SUBUNIT</scope>
</reference>
<keyword id="KW-0002">3D-structure</keyword>
<keyword id="KW-0903">Direct protein sequencing</keyword>
<keyword id="KW-0249">Electron transport</keyword>
<keyword id="KW-0547">Nucleotide-binding</keyword>
<keyword id="KW-0813">Transport</keyword>
<evidence type="ECO:0000269" key="1">
    <source>
    </source>
</evidence>
<evidence type="ECO:0000269" key="2">
    <source>
    </source>
</evidence>
<evidence type="ECO:0000305" key="3"/>
<evidence type="ECO:0007744" key="4">
    <source>
        <dbReference type="PDB" id="1O94"/>
    </source>
</evidence>
<evidence type="ECO:0007744" key="5">
    <source>
        <dbReference type="PDB" id="1O95"/>
    </source>
</evidence>
<evidence type="ECO:0007744" key="6">
    <source>
        <dbReference type="PDB" id="1O96"/>
    </source>
</evidence>
<evidence type="ECO:0007744" key="7">
    <source>
        <dbReference type="PDB" id="1O97"/>
    </source>
</evidence>
<evidence type="ECO:0007744" key="8">
    <source>
        <dbReference type="PDB" id="3CLR"/>
    </source>
</evidence>
<evidence type="ECO:0007744" key="9">
    <source>
        <dbReference type="PDB" id="3CLS"/>
    </source>
</evidence>
<evidence type="ECO:0007744" key="10">
    <source>
        <dbReference type="PDB" id="3CLU"/>
    </source>
</evidence>
<evidence type="ECO:0007829" key="11">
    <source>
        <dbReference type="PDB" id="1O94"/>
    </source>
</evidence>
<evidence type="ECO:0007829" key="12">
    <source>
        <dbReference type="PDB" id="1O96"/>
    </source>
</evidence>
<evidence type="ECO:0007829" key="13">
    <source>
        <dbReference type="PDB" id="1O97"/>
    </source>
</evidence>
<feature type="chain" id="PRO_0000167880" description="Electron transfer flavoprotein subunit beta">
    <location>
        <begin position="1"/>
        <end position="264"/>
    </location>
</feature>
<feature type="binding site" evidence="1 4 5 6 8 9 10">
    <location>
        <position position="6"/>
    </location>
    <ligand>
        <name>AMP</name>
        <dbReference type="ChEBI" id="CHEBI:456215"/>
    </ligand>
</feature>
<feature type="binding site" evidence="1 4 5 6 8 9 10">
    <location>
        <begin position="36"/>
        <end position="39"/>
    </location>
    <ligand>
        <name>AMP</name>
        <dbReference type="ChEBI" id="CHEBI:456215"/>
    </ligand>
</feature>
<feature type="binding site" evidence="4 5 6 8 9 10">
    <location>
        <position position="64"/>
    </location>
    <ligand>
        <name>AMP</name>
        <dbReference type="ChEBI" id="CHEBI:456215"/>
    </ligand>
</feature>
<feature type="binding site" evidence="1 4 5 6 8 9 10">
    <location>
        <begin position="119"/>
        <end position="122"/>
    </location>
    <ligand>
        <name>AMP</name>
        <dbReference type="ChEBI" id="CHEBI:456215"/>
    </ligand>
</feature>
<feature type="binding site" evidence="1 4 5 6 8 9 10">
    <location>
        <begin position="127"/>
        <end position="130"/>
    </location>
    <ligand>
        <name>AMP</name>
        <dbReference type="ChEBI" id="CHEBI:456215"/>
    </ligand>
</feature>
<feature type="strand" evidence="13">
    <location>
        <begin position="2"/>
        <end position="6"/>
    </location>
</feature>
<feature type="strand" evidence="13">
    <location>
        <begin position="9"/>
        <end position="13"/>
    </location>
</feature>
<feature type="strand" evidence="13">
    <location>
        <begin position="23"/>
        <end position="26"/>
    </location>
</feature>
<feature type="helix" evidence="13">
    <location>
        <begin position="28"/>
        <end position="30"/>
    </location>
</feature>
<feature type="strand" evidence="13">
    <location>
        <begin position="31"/>
        <end position="35"/>
    </location>
</feature>
<feature type="helix" evidence="13">
    <location>
        <begin position="37"/>
        <end position="52"/>
    </location>
</feature>
<feature type="strand" evidence="11">
    <location>
        <begin position="53"/>
        <end position="55"/>
    </location>
</feature>
<feature type="strand" evidence="13">
    <location>
        <begin position="58"/>
        <end position="65"/>
    </location>
</feature>
<feature type="helix" evidence="13">
    <location>
        <begin position="67"/>
        <end position="69"/>
    </location>
</feature>
<feature type="helix" evidence="13">
    <location>
        <begin position="70"/>
        <end position="78"/>
    </location>
</feature>
<feature type="strand" evidence="13">
    <location>
        <begin position="82"/>
        <end position="87"/>
    </location>
</feature>
<feature type="helix" evidence="13">
    <location>
        <begin position="90"/>
        <end position="92"/>
    </location>
</feature>
<feature type="helix" evidence="13">
    <location>
        <begin position="97"/>
        <end position="111"/>
    </location>
</feature>
<feature type="strand" evidence="13">
    <location>
        <begin position="114"/>
        <end position="120"/>
    </location>
</feature>
<feature type="turn" evidence="13">
    <location>
        <begin position="123"/>
        <end position="125"/>
    </location>
</feature>
<feature type="helix" evidence="13">
    <location>
        <begin position="130"/>
        <end position="138"/>
    </location>
</feature>
<feature type="strand" evidence="13">
    <location>
        <begin position="142"/>
        <end position="150"/>
    </location>
</feature>
<feature type="strand" evidence="13">
    <location>
        <begin position="156"/>
        <end position="163"/>
    </location>
</feature>
<feature type="helix" evidence="13">
    <location>
        <begin position="165"/>
        <end position="167"/>
    </location>
</feature>
<feature type="strand" evidence="13">
    <location>
        <begin position="169"/>
        <end position="177"/>
    </location>
</feature>
<feature type="strand" evidence="13">
    <location>
        <begin position="179"/>
        <end position="182"/>
    </location>
</feature>
<feature type="helix" evidence="11">
    <location>
        <begin position="194"/>
        <end position="202"/>
    </location>
</feature>
<feature type="strand" evidence="13">
    <location>
        <begin position="206"/>
        <end position="208"/>
    </location>
</feature>
<feature type="helix" evidence="13">
    <location>
        <begin position="211"/>
        <end position="213"/>
    </location>
</feature>
<feature type="helix" evidence="13">
    <location>
        <begin position="217"/>
        <end position="219"/>
    </location>
</feature>
<feature type="helix" evidence="13">
    <location>
        <begin position="222"/>
        <end position="224"/>
    </location>
</feature>
<feature type="strand" evidence="13">
    <location>
        <begin position="225"/>
        <end position="233"/>
    </location>
</feature>
<feature type="strand" evidence="12">
    <location>
        <begin position="241"/>
        <end position="243"/>
    </location>
</feature>
<feature type="helix" evidence="13">
    <location>
        <begin position="247"/>
        <end position="260"/>
    </location>
</feature>
<protein>
    <recommendedName>
        <fullName>Electron transfer flavoprotein subunit beta</fullName>
        <shortName>Beta-ETF</shortName>
    </recommendedName>
    <alternativeName>
        <fullName>Electron transfer flavoprotein small subunit</fullName>
        <shortName>ETFSS</shortName>
    </alternativeName>
</protein>
<comment type="function">
    <text evidence="2 3">Heterodimeric electron transfer flavoprotein that accepts electrons from trimethylamine dehydrogenase (PubMed:7798207). It transfers the electrons to the main respiratory chain via ETF-ubiquinone oxidoreductase (ETF dehydrogenase) (Probable). EtfB binds an AMP molecule that probably has a purely structural role (PubMed:7798207).</text>
</comment>
<comment type="subunit">
    <text evidence="1 2">Heterodimer of an alpha and a beta subunit (PubMed:7798207, PubMed:12567183). Forms a ternary complex with trimethylamine dehydrogenase (PubMed:12567183).</text>
</comment>
<comment type="mass spectrometry"/>
<comment type="similarity">
    <text evidence="3">Belongs to the ETF beta-subunit/FixA family.</text>
</comment>
<proteinExistence type="evidence at protein level"/>